<sequence>METTIMVVAMDRLTYYKLTSRYLYYFCLDRLLSCHRLDLDRDRKINWRHPKYWNYNNIPKGEKPYLRHIDLWDYRGNFKDWIIENLRSIYCSPYYFESPRYELEYPAIDYNYWDWVIDIDFKGNFKKSKEIAKEVREIFKDYGVKDIHIKFSGSKGFHIWINARYLPNEILNKGYVEGSTILTNFLNFKLRKLLDFVGKEGDTGIDLSIYKENMTVTAPFSLYYADIEGKTPISIPFPINKVEKFKPIYLQNVKPYFIRKLTKYYENFGEIRGDLTDFVDDALRYYQATKKVNNDIKIDLEINTNKKAKPKVEHSKREYIKTTIGDKEVVLNKVKLESYLNELINSNWEDGKMRGCYYLTSLCKLLGYGRDKTIKLLNRWASKYGNKYIKHIDYEVRYLYDRNGKVCSIKWLKENIPEAKTQIEIYKKYYELDKNNYLVKK</sequence>
<gene>
    <name type="ordered locus">MJECS07</name>
</gene>
<reference key="1">
    <citation type="journal article" date="1996" name="Science">
        <title>Complete genome sequence of the methanogenic archaeon, Methanococcus jannaschii.</title>
        <authorList>
            <person name="Bult C.J."/>
            <person name="White O."/>
            <person name="Olsen G.J."/>
            <person name="Zhou L."/>
            <person name="Fleischmann R.D."/>
            <person name="Sutton G.G."/>
            <person name="Blake J.A."/>
            <person name="FitzGerald L.M."/>
            <person name="Clayton R.A."/>
            <person name="Gocayne J.D."/>
            <person name="Kerlavage A.R."/>
            <person name="Dougherty B.A."/>
            <person name="Tomb J.-F."/>
            <person name="Adams M.D."/>
            <person name="Reich C.I."/>
            <person name="Overbeek R."/>
            <person name="Kirkness E.F."/>
            <person name="Weinstock K.G."/>
            <person name="Merrick J.M."/>
            <person name="Glodek A."/>
            <person name="Scott J.L."/>
            <person name="Geoghagen N.S.M."/>
            <person name="Weidman J.F."/>
            <person name="Fuhrmann J.L."/>
            <person name="Nguyen D."/>
            <person name="Utterback T.R."/>
            <person name="Kelley J.M."/>
            <person name="Peterson J.D."/>
            <person name="Sadow P.W."/>
            <person name="Hanna M.C."/>
            <person name="Cotton M.D."/>
            <person name="Roberts K.M."/>
            <person name="Hurst M.A."/>
            <person name="Kaine B.P."/>
            <person name="Borodovsky M."/>
            <person name="Klenk H.-P."/>
            <person name="Fraser C.M."/>
            <person name="Smith H.O."/>
            <person name="Woese C.R."/>
            <person name="Venter J.C."/>
        </authorList>
    </citation>
    <scope>NUCLEOTIDE SEQUENCE [LARGE SCALE GENOMIC DNA]</scope>
    <source>
        <strain>ATCC 43067 / DSM 2661 / JAL-1 / JCM 10045 / NBRC 100440</strain>
    </source>
</reference>
<protein>
    <recommendedName>
        <fullName>Uncharacterized protein MJECS07</fullName>
    </recommendedName>
</protein>
<dbReference type="EMBL" id="L77119">
    <property type="protein sequence ID" value="AAC37065.1"/>
    <property type="molecule type" value="Genomic_DNA"/>
</dbReference>
<dbReference type="PIR" id="G64516">
    <property type="entry name" value="G64516"/>
</dbReference>
<dbReference type="PaxDb" id="243232-MJ_ECS07"/>
<dbReference type="EnsemblBacteria" id="AAC37065">
    <property type="protein sequence ID" value="AAC37065"/>
    <property type="gene ID" value="MJ_ECS07"/>
</dbReference>
<dbReference type="KEGG" id="mja:MJ_ECS07"/>
<dbReference type="eggNOG" id="arCOG04110">
    <property type="taxonomic scope" value="Archaea"/>
</dbReference>
<dbReference type="HOGENOM" id="CLU_620571_0_0_2"/>
<dbReference type="InParanoid" id="Q60306"/>
<dbReference type="OrthoDB" id="31125at2157"/>
<dbReference type="Proteomes" id="UP000000805">
    <property type="component" value="Plasmid pDSM2661_2"/>
</dbReference>
<dbReference type="Gene3D" id="3.30.70.3300">
    <property type="match status" value="1"/>
</dbReference>
<dbReference type="SUPFAM" id="SSF56747">
    <property type="entry name" value="Prim-pol domain"/>
    <property type="match status" value="1"/>
</dbReference>
<organism>
    <name type="scientific">Methanocaldococcus jannaschii (strain ATCC 43067 / DSM 2661 / JAL-1 / JCM 10045 / NBRC 100440)</name>
    <name type="common">Methanococcus jannaschii</name>
    <dbReference type="NCBI Taxonomy" id="243232"/>
    <lineage>
        <taxon>Archaea</taxon>
        <taxon>Methanobacteriati</taxon>
        <taxon>Methanobacteriota</taxon>
        <taxon>Methanomada group</taxon>
        <taxon>Methanococci</taxon>
        <taxon>Methanococcales</taxon>
        <taxon>Methanocaldococcaceae</taxon>
        <taxon>Methanocaldococcus</taxon>
    </lineage>
</organism>
<proteinExistence type="predicted"/>
<geneLocation type="plasmid">
    <name>small ECE</name>
</geneLocation>
<keyword id="KW-0614">Plasmid</keyword>
<keyword id="KW-1185">Reference proteome</keyword>
<name>Y3407_METJA</name>
<feature type="chain" id="PRO_0000107488" description="Uncharacterized protein MJECS07">
    <location>
        <begin position="1"/>
        <end position="441"/>
    </location>
</feature>
<accession>Q60306</accession>